<evidence type="ECO:0000255" key="1">
    <source>
        <dbReference type="HAMAP-Rule" id="MF_01438"/>
    </source>
</evidence>
<evidence type="ECO:0000255" key="2">
    <source>
        <dbReference type="PROSITE-ProRule" id="PRU01130"/>
    </source>
</evidence>
<accession>B7HJ22</accession>
<organism>
    <name type="scientific">Bacillus cereus (strain B4264)</name>
    <dbReference type="NCBI Taxonomy" id="405532"/>
    <lineage>
        <taxon>Bacteria</taxon>
        <taxon>Bacillati</taxon>
        <taxon>Bacillota</taxon>
        <taxon>Bacilli</taxon>
        <taxon>Bacillales</taxon>
        <taxon>Bacillaceae</taxon>
        <taxon>Bacillus</taxon>
        <taxon>Bacillus cereus group</taxon>
    </lineage>
</organism>
<proteinExistence type="inferred from homology"/>
<sequence>MEENKQRVKSIINILQLVAPGTPLREGIDNVLRAQTGGLIVLGYNEQIKSIVDGGFHINCAFSPASLYELAKMDGALILNETGSKILIANAQLVPDSSIDSIETGMRHRTAERVAKQTGSLVVAISQRRNVITLYQGNLRYTLKDIGVILTKANQAIQTLEKYKAVWNDGITNLGILEFEEVVTMSEVVHVLHSVEMVLRIKNEILSYIHELGTEGRLIRLQLTELLADLEAEAALLIKDYHQEKTQDHHQILKKLQDLANTQLLEDSDLVKLLGYPGQTSLEESVTPRGYRITSKISRVPPLIIENLINRFKTLQGVCRATINELDDVEGIGEVRAKKIREGLKRIQEHLYMSRHN</sequence>
<feature type="chain" id="PRO_1000145854" description="DNA integrity scanning protein DisA">
    <location>
        <begin position="1"/>
        <end position="357"/>
    </location>
</feature>
<feature type="domain" description="DAC" evidence="2">
    <location>
        <begin position="8"/>
        <end position="146"/>
    </location>
</feature>
<feature type="binding site" evidence="1">
    <location>
        <position position="75"/>
    </location>
    <ligand>
        <name>ATP</name>
        <dbReference type="ChEBI" id="CHEBI:30616"/>
    </ligand>
</feature>
<feature type="binding site" evidence="1">
    <location>
        <position position="93"/>
    </location>
    <ligand>
        <name>ATP</name>
        <dbReference type="ChEBI" id="CHEBI:30616"/>
    </ligand>
</feature>
<feature type="binding site" evidence="1">
    <location>
        <begin position="106"/>
        <end position="110"/>
    </location>
    <ligand>
        <name>ATP</name>
        <dbReference type="ChEBI" id="CHEBI:30616"/>
    </ligand>
</feature>
<protein>
    <recommendedName>
        <fullName evidence="1">DNA integrity scanning protein DisA</fullName>
    </recommendedName>
    <alternativeName>
        <fullName evidence="1">Cyclic di-AMP synthase</fullName>
        <shortName evidence="1">c-di-AMP synthase</shortName>
    </alternativeName>
    <alternativeName>
        <fullName evidence="1">Diadenylate cyclase</fullName>
        <ecNumber evidence="1">2.7.7.85</ecNumber>
    </alternativeName>
</protein>
<dbReference type="EC" id="2.7.7.85" evidence="1"/>
<dbReference type="EMBL" id="CP001176">
    <property type="protein sequence ID" value="ACK59523.1"/>
    <property type="molecule type" value="Genomic_DNA"/>
</dbReference>
<dbReference type="RefSeq" id="WP_000392158.1">
    <property type="nucleotide sequence ID" value="NZ_VEHB01000017.1"/>
</dbReference>
<dbReference type="SMR" id="B7HJ22"/>
<dbReference type="KEGG" id="bcb:BCB4264_A0104"/>
<dbReference type="HOGENOM" id="CLU_787128_0_0_9"/>
<dbReference type="Proteomes" id="UP000007096">
    <property type="component" value="Chromosome"/>
</dbReference>
<dbReference type="GO" id="GO:0004016">
    <property type="term" value="F:adenylate cyclase activity"/>
    <property type="evidence" value="ECO:0007669"/>
    <property type="project" value="TreeGrafter"/>
</dbReference>
<dbReference type="GO" id="GO:0005524">
    <property type="term" value="F:ATP binding"/>
    <property type="evidence" value="ECO:0007669"/>
    <property type="project" value="UniProtKB-UniRule"/>
</dbReference>
<dbReference type="GO" id="GO:0106408">
    <property type="term" value="F:diadenylate cyclase activity"/>
    <property type="evidence" value="ECO:0007669"/>
    <property type="project" value="UniProtKB-EC"/>
</dbReference>
<dbReference type="GO" id="GO:0003677">
    <property type="term" value="F:DNA binding"/>
    <property type="evidence" value="ECO:0007669"/>
    <property type="project" value="UniProtKB-UniRule"/>
</dbReference>
<dbReference type="GO" id="GO:0006281">
    <property type="term" value="P:DNA repair"/>
    <property type="evidence" value="ECO:0007669"/>
    <property type="project" value="UniProtKB-UniRule"/>
</dbReference>
<dbReference type="FunFam" id="1.10.150.20:FF:000023">
    <property type="entry name" value="DNA integrity scanning protein DisA"/>
    <property type="match status" value="1"/>
</dbReference>
<dbReference type="FunFam" id="1.20.1260.110:FF:000001">
    <property type="entry name" value="DNA integrity scanning protein DisA"/>
    <property type="match status" value="1"/>
</dbReference>
<dbReference type="FunFam" id="3.40.1700.10:FF:000001">
    <property type="entry name" value="DNA integrity scanning protein DisA"/>
    <property type="match status" value="1"/>
</dbReference>
<dbReference type="Gene3D" id="1.10.150.20">
    <property type="entry name" value="5' to 3' exonuclease, C-terminal subdomain"/>
    <property type="match status" value="1"/>
</dbReference>
<dbReference type="Gene3D" id="1.20.1260.110">
    <property type="entry name" value="DNA integrity scanning linker region"/>
    <property type="match status" value="1"/>
</dbReference>
<dbReference type="Gene3D" id="3.40.1700.10">
    <property type="entry name" value="DNA integrity scanning protein, DisA, N-terminal domain"/>
    <property type="match status" value="1"/>
</dbReference>
<dbReference type="HAMAP" id="MF_01438">
    <property type="entry name" value="DisA"/>
    <property type="match status" value="1"/>
</dbReference>
<dbReference type="InterPro" id="IPR050338">
    <property type="entry name" value="DisA"/>
</dbReference>
<dbReference type="InterPro" id="IPR038331">
    <property type="entry name" value="DisA_sf"/>
</dbReference>
<dbReference type="InterPro" id="IPR036888">
    <property type="entry name" value="DNA_integrity_DisA_N_sf"/>
</dbReference>
<dbReference type="InterPro" id="IPR018906">
    <property type="entry name" value="DNA_integrity_scan_DisA_link"/>
</dbReference>
<dbReference type="InterPro" id="IPR003390">
    <property type="entry name" value="DNA_integrity_scan_DisA_N"/>
</dbReference>
<dbReference type="InterPro" id="IPR023763">
    <property type="entry name" value="DNA_integrity_scanning_protein"/>
</dbReference>
<dbReference type="InterPro" id="IPR010994">
    <property type="entry name" value="RuvA_2-like"/>
</dbReference>
<dbReference type="NCBIfam" id="NF010009">
    <property type="entry name" value="PRK13482.1"/>
    <property type="match status" value="1"/>
</dbReference>
<dbReference type="PANTHER" id="PTHR34185">
    <property type="entry name" value="DIADENYLATE CYCLASE"/>
    <property type="match status" value="1"/>
</dbReference>
<dbReference type="PANTHER" id="PTHR34185:SF3">
    <property type="entry name" value="DNA INTEGRITY SCANNING PROTEIN DISA"/>
    <property type="match status" value="1"/>
</dbReference>
<dbReference type="Pfam" id="PF02457">
    <property type="entry name" value="DAC"/>
    <property type="match status" value="1"/>
</dbReference>
<dbReference type="Pfam" id="PF10635">
    <property type="entry name" value="DisA-linker"/>
    <property type="match status" value="1"/>
</dbReference>
<dbReference type="SUPFAM" id="SSF47781">
    <property type="entry name" value="RuvA domain 2-like"/>
    <property type="match status" value="1"/>
</dbReference>
<dbReference type="SUPFAM" id="SSF143597">
    <property type="entry name" value="YojJ-like"/>
    <property type="match status" value="1"/>
</dbReference>
<dbReference type="PROSITE" id="PS51794">
    <property type="entry name" value="DAC"/>
    <property type="match status" value="1"/>
</dbReference>
<comment type="function">
    <text evidence="1">Participates in a DNA-damage check-point that is active prior to asymmetric division when DNA is damaged. DisA forms globular foci that rapidly scan along the chromosomes during sporulation, searching for lesions. When a lesion is present, DisA pauses at the lesion site. This triggers a cellular response that culminates in a temporary block in sporulation initiation.</text>
</comment>
<comment type="function">
    <text evidence="1">Also has diadenylate cyclase activity, catalyzing the condensation of 2 ATP molecules into cyclic di-AMP (c-di-AMP). c-di-AMP acts as a signaling molecule that couples DNA integrity with progression of sporulation. The rise in c-di-AMP level generated by DisA while scanning the chromosome, operates as a positive signal that advances sporulation; upon encountering a lesion, the DisA focus arrests at the damaged site and halts c-di-AMP synthesis.</text>
</comment>
<comment type="catalytic activity">
    <reaction evidence="1">
        <text>2 ATP = 3',3'-c-di-AMP + 2 diphosphate</text>
        <dbReference type="Rhea" id="RHEA:35655"/>
        <dbReference type="ChEBI" id="CHEBI:30616"/>
        <dbReference type="ChEBI" id="CHEBI:33019"/>
        <dbReference type="ChEBI" id="CHEBI:71500"/>
        <dbReference type="EC" id="2.7.7.85"/>
    </reaction>
</comment>
<comment type="cofactor">
    <cofactor evidence="1">
        <name>Mg(2+)</name>
        <dbReference type="ChEBI" id="CHEBI:18420"/>
    </cofactor>
</comment>
<comment type="subunit">
    <text evidence="1">Homooctamer.</text>
</comment>
<comment type="similarity">
    <text evidence="1">Belongs to the DisA family.</text>
</comment>
<name>DISA_BACC4</name>
<keyword id="KW-0067">ATP-binding</keyword>
<keyword id="KW-0227">DNA damage</keyword>
<keyword id="KW-0234">DNA repair</keyword>
<keyword id="KW-0238">DNA-binding</keyword>
<keyword id="KW-0460">Magnesium</keyword>
<keyword id="KW-0547">Nucleotide-binding</keyword>
<keyword id="KW-0548">Nucleotidyltransferase</keyword>
<keyword id="KW-0808">Transferase</keyword>
<reference key="1">
    <citation type="submission" date="2008-10" db="EMBL/GenBank/DDBJ databases">
        <title>Genome sequence of Bacillus cereus B4264.</title>
        <authorList>
            <person name="Dodson R.J."/>
            <person name="Durkin A.S."/>
            <person name="Rosovitz M.J."/>
            <person name="Rasko D.A."/>
            <person name="Hoffmaster A."/>
            <person name="Ravel J."/>
            <person name="Sutton G."/>
        </authorList>
    </citation>
    <scope>NUCLEOTIDE SEQUENCE [LARGE SCALE GENOMIC DNA]</scope>
    <source>
        <strain>B4264</strain>
    </source>
</reference>
<gene>
    <name evidence="1" type="primary">disA</name>
    <name type="ordered locus">BCB4264_A0104</name>
</gene>